<reference key="1">
    <citation type="submission" date="2006-05" db="EMBL/GenBank/DDBJ databases">
        <title>Complete sequence of chromosome 1 of Burkholderia cenocepacia AU 1054.</title>
        <authorList>
            <consortium name="US DOE Joint Genome Institute"/>
            <person name="Copeland A."/>
            <person name="Lucas S."/>
            <person name="Lapidus A."/>
            <person name="Barry K."/>
            <person name="Detter J.C."/>
            <person name="Glavina del Rio T."/>
            <person name="Hammon N."/>
            <person name="Israni S."/>
            <person name="Dalin E."/>
            <person name="Tice H."/>
            <person name="Pitluck S."/>
            <person name="Chain P."/>
            <person name="Malfatti S."/>
            <person name="Shin M."/>
            <person name="Vergez L."/>
            <person name="Schmutz J."/>
            <person name="Larimer F."/>
            <person name="Land M."/>
            <person name="Hauser L."/>
            <person name="Kyrpides N."/>
            <person name="Lykidis A."/>
            <person name="LiPuma J.J."/>
            <person name="Konstantinidis K."/>
            <person name="Tiedje J.M."/>
            <person name="Richardson P."/>
        </authorList>
    </citation>
    <scope>NUCLEOTIDE SEQUENCE [LARGE SCALE GENOMIC DNA]</scope>
    <source>
        <strain>AU 1054</strain>
    </source>
</reference>
<evidence type="ECO:0000255" key="1">
    <source>
        <dbReference type="HAMAP-Rule" id="MF_00532"/>
    </source>
</evidence>
<evidence type="ECO:0000305" key="2"/>
<dbReference type="EMBL" id="CP000378">
    <property type="protein sequence ID" value="ABF75111.1"/>
    <property type="molecule type" value="Genomic_DNA"/>
</dbReference>
<dbReference type="SMR" id="Q1BZ44"/>
<dbReference type="HOGENOM" id="CLU_046483_2_1_4"/>
<dbReference type="GO" id="GO:0022627">
    <property type="term" value="C:cytosolic small ribosomal subunit"/>
    <property type="evidence" value="ECO:0007669"/>
    <property type="project" value="TreeGrafter"/>
</dbReference>
<dbReference type="GO" id="GO:0003723">
    <property type="term" value="F:RNA binding"/>
    <property type="evidence" value="ECO:0007669"/>
    <property type="project" value="TreeGrafter"/>
</dbReference>
<dbReference type="GO" id="GO:0003735">
    <property type="term" value="F:structural constituent of ribosome"/>
    <property type="evidence" value="ECO:0007669"/>
    <property type="project" value="InterPro"/>
</dbReference>
<dbReference type="GO" id="GO:0006412">
    <property type="term" value="P:translation"/>
    <property type="evidence" value="ECO:0007669"/>
    <property type="project" value="UniProtKB-UniRule"/>
</dbReference>
<dbReference type="FunFam" id="3.30.230.10:FF:000001">
    <property type="entry name" value="30S ribosomal protein S9"/>
    <property type="match status" value="1"/>
</dbReference>
<dbReference type="Gene3D" id="3.30.230.10">
    <property type="match status" value="1"/>
</dbReference>
<dbReference type="HAMAP" id="MF_00532_B">
    <property type="entry name" value="Ribosomal_uS9_B"/>
    <property type="match status" value="1"/>
</dbReference>
<dbReference type="InterPro" id="IPR020568">
    <property type="entry name" value="Ribosomal_Su5_D2-typ_SF"/>
</dbReference>
<dbReference type="InterPro" id="IPR000754">
    <property type="entry name" value="Ribosomal_uS9"/>
</dbReference>
<dbReference type="InterPro" id="IPR023035">
    <property type="entry name" value="Ribosomal_uS9_bac/plastid"/>
</dbReference>
<dbReference type="InterPro" id="IPR020574">
    <property type="entry name" value="Ribosomal_uS9_CS"/>
</dbReference>
<dbReference type="InterPro" id="IPR014721">
    <property type="entry name" value="Ribsml_uS5_D2-typ_fold_subgr"/>
</dbReference>
<dbReference type="NCBIfam" id="NF001099">
    <property type="entry name" value="PRK00132.1"/>
    <property type="match status" value="1"/>
</dbReference>
<dbReference type="PANTHER" id="PTHR21569">
    <property type="entry name" value="RIBOSOMAL PROTEIN S9"/>
    <property type="match status" value="1"/>
</dbReference>
<dbReference type="PANTHER" id="PTHR21569:SF1">
    <property type="entry name" value="SMALL RIBOSOMAL SUBUNIT PROTEIN US9M"/>
    <property type="match status" value="1"/>
</dbReference>
<dbReference type="Pfam" id="PF00380">
    <property type="entry name" value="Ribosomal_S9"/>
    <property type="match status" value="1"/>
</dbReference>
<dbReference type="SUPFAM" id="SSF54211">
    <property type="entry name" value="Ribosomal protein S5 domain 2-like"/>
    <property type="match status" value="1"/>
</dbReference>
<dbReference type="PROSITE" id="PS00360">
    <property type="entry name" value="RIBOSOMAL_S9"/>
    <property type="match status" value="1"/>
</dbReference>
<gene>
    <name evidence="1" type="primary">rpsI</name>
    <name type="ordered locus">Bcen_0197</name>
</gene>
<feature type="chain" id="PRO_1000051180" description="Small ribosomal subunit protein uS9">
    <location>
        <begin position="1"/>
        <end position="130"/>
    </location>
</feature>
<organism>
    <name type="scientific">Burkholderia orbicola (strain AU 1054)</name>
    <dbReference type="NCBI Taxonomy" id="331271"/>
    <lineage>
        <taxon>Bacteria</taxon>
        <taxon>Pseudomonadati</taxon>
        <taxon>Pseudomonadota</taxon>
        <taxon>Betaproteobacteria</taxon>
        <taxon>Burkholderiales</taxon>
        <taxon>Burkholderiaceae</taxon>
        <taxon>Burkholderia</taxon>
        <taxon>Burkholderia cepacia complex</taxon>
        <taxon>Burkholderia orbicola</taxon>
    </lineage>
</organism>
<protein>
    <recommendedName>
        <fullName evidence="1">Small ribosomal subunit protein uS9</fullName>
    </recommendedName>
    <alternativeName>
        <fullName evidence="2">30S ribosomal protein S9</fullName>
    </alternativeName>
</protein>
<keyword id="KW-0687">Ribonucleoprotein</keyword>
<keyword id="KW-0689">Ribosomal protein</keyword>
<sequence length="130" mass="14316">MIGNWNYGTGRRKSAVARVFIKAGKGDIIVNGKPIADYFSRETSLMIVRQPLELTNHGQTFDIKVNVNGGGETGQAGAVRHGITRALIDYDATLKPSLSSAGFVTRDAREVERKKVGLRKARRAKQFSKR</sequence>
<proteinExistence type="inferred from homology"/>
<name>RS9_BURO1</name>
<accession>Q1BZ44</accession>
<comment type="similarity">
    <text evidence="1">Belongs to the universal ribosomal protein uS9 family.</text>
</comment>